<keyword id="KW-0963">Cytoplasm</keyword>
<keyword id="KW-0687">Ribonucleoprotein</keyword>
<keyword id="KW-0694">RNA-binding</keyword>
<keyword id="KW-0733">Signal recognition particle</keyword>
<accession>A1RS22</accession>
<protein>
    <recommendedName>
        <fullName evidence="1">Signal recognition particle 19 kDa protein</fullName>
        <shortName evidence="1">SRP19</shortName>
    </recommendedName>
</protein>
<reference key="1">
    <citation type="submission" date="2006-12" db="EMBL/GenBank/DDBJ databases">
        <title>Complete sequence of Pyrobaculum islandicum DSM 4184.</title>
        <authorList>
            <person name="Copeland A."/>
            <person name="Lucas S."/>
            <person name="Lapidus A."/>
            <person name="Barry K."/>
            <person name="Detter J.C."/>
            <person name="Glavina del Rio T."/>
            <person name="Dalin E."/>
            <person name="Tice H."/>
            <person name="Pitluck S."/>
            <person name="Meincke L."/>
            <person name="Brettin T."/>
            <person name="Bruce D."/>
            <person name="Han C."/>
            <person name="Tapia R."/>
            <person name="Gilna P."/>
            <person name="Schmutz J."/>
            <person name="Larimer F."/>
            <person name="Land M."/>
            <person name="Hauser L."/>
            <person name="Kyrpides N."/>
            <person name="Mikhailova N."/>
            <person name="Cozen A.E."/>
            <person name="Fitz-Gibbon S.T."/>
            <person name="House C.H."/>
            <person name="Saltikov C."/>
            <person name="Lowe T."/>
            <person name="Richardson P."/>
        </authorList>
    </citation>
    <scope>NUCLEOTIDE SEQUENCE [LARGE SCALE GENOMIC DNA]</scope>
    <source>
        <strain>DSM 4184 / JCM 9189 / GEO3</strain>
    </source>
</reference>
<organism>
    <name type="scientific">Pyrobaculum islandicum (strain DSM 4184 / JCM 9189 / GEO3)</name>
    <dbReference type="NCBI Taxonomy" id="384616"/>
    <lineage>
        <taxon>Archaea</taxon>
        <taxon>Thermoproteota</taxon>
        <taxon>Thermoprotei</taxon>
        <taxon>Thermoproteales</taxon>
        <taxon>Thermoproteaceae</taxon>
        <taxon>Pyrobaculum</taxon>
    </lineage>
</organism>
<comment type="function">
    <text evidence="1">Involved in targeting and insertion of nascent membrane proteins into the cytoplasmic membrane. Binds directly to 7S RNA and mediates binding of the 54 kDa subunit of the SRP.</text>
</comment>
<comment type="subunit">
    <text evidence="1">Part of the signal recognition particle protein translocation system, which is composed of SRP and FtsY. Archaeal SRP consists of a 7S RNA molecule of 300 nucleotides and two protein subunits: SRP54 and SRP19.</text>
</comment>
<comment type="subcellular location">
    <subcellularLocation>
        <location evidence="1">Cytoplasm</location>
    </subcellularLocation>
</comment>
<comment type="similarity">
    <text evidence="1">Belongs to the SRP19 family.</text>
</comment>
<dbReference type="EMBL" id="CP000504">
    <property type="protein sequence ID" value="ABL87754.1"/>
    <property type="molecule type" value="Genomic_DNA"/>
</dbReference>
<dbReference type="RefSeq" id="WP_011762330.1">
    <property type="nucleotide sequence ID" value="NC_008701.1"/>
</dbReference>
<dbReference type="SMR" id="A1RS22"/>
<dbReference type="STRING" id="384616.Pisl_0576"/>
<dbReference type="GeneID" id="4616302"/>
<dbReference type="KEGG" id="pis:Pisl_0576"/>
<dbReference type="eggNOG" id="arCOG01217">
    <property type="taxonomic scope" value="Archaea"/>
</dbReference>
<dbReference type="HOGENOM" id="CLU_169299_1_0_2"/>
<dbReference type="OrthoDB" id="56356at2157"/>
<dbReference type="Proteomes" id="UP000002595">
    <property type="component" value="Chromosome"/>
</dbReference>
<dbReference type="GO" id="GO:0048500">
    <property type="term" value="C:signal recognition particle"/>
    <property type="evidence" value="ECO:0007669"/>
    <property type="project" value="UniProtKB-UniRule"/>
</dbReference>
<dbReference type="GO" id="GO:0008312">
    <property type="term" value="F:7S RNA binding"/>
    <property type="evidence" value="ECO:0007669"/>
    <property type="project" value="UniProtKB-UniRule"/>
</dbReference>
<dbReference type="GO" id="GO:0006614">
    <property type="term" value="P:SRP-dependent cotranslational protein targeting to membrane"/>
    <property type="evidence" value="ECO:0007669"/>
    <property type="project" value="InterPro"/>
</dbReference>
<dbReference type="Gene3D" id="3.30.56.30">
    <property type="entry name" value="Signal recognition particle, SRP19-like subunit"/>
    <property type="match status" value="1"/>
</dbReference>
<dbReference type="HAMAP" id="MF_00305">
    <property type="entry name" value="SRP19"/>
    <property type="match status" value="1"/>
</dbReference>
<dbReference type="InterPro" id="IPR002778">
    <property type="entry name" value="Signal_recog_particle_SRP19"/>
</dbReference>
<dbReference type="InterPro" id="IPR036521">
    <property type="entry name" value="SRP19-like_sf"/>
</dbReference>
<dbReference type="InterPro" id="IPR022938">
    <property type="entry name" value="SRP19_arc-type"/>
</dbReference>
<dbReference type="Pfam" id="PF01922">
    <property type="entry name" value="SRP19"/>
    <property type="match status" value="1"/>
</dbReference>
<dbReference type="SUPFAM" id="SSF69695">
    <property type="entry name" value="SRP19"/>
    <property type="match status" value="1"/>
</dbReference>
<name>SRP19_PYRIL</name>
<proteinExistence type="inferred from homology"/>
<evidence type="ECO:0000255" key="1">
    <source>
        <dbReference type="HAMAP-Rule" id="MF_00305"/>
    </source>
</evidence>
<gene>
    <name evidence="1" type="primary">srp19</name>
    <name type="ordered locus">Pisl_0576</name>
</gene>
<sequence>MKKRGGRILWLVYLDSSVPRSRGRILPRSKAVSKPTLQEVIQALERLGYRYQVYQDKKYPALWFEERQGYIVVETSEKLRILALKVAEEVRKLRR</sequence>
<feature type="chain" id="PRO_0000300752" description="Signal recognition particle 19 kDa protein">
    <location>
        <begin position="1"/>
        <end position="95"/>
    </location>
</feature>